<name>SR5A3_XENTR</name>
<reference key="1">
    <citation type="submission" date="2006-08" db="EMBL/GenBank/DDBJ databases">
        <authorList>
            <consortium name="NIH - Xenopus Gene Collection (XGC) project"/>
        </authorList>
    </citation>
    <scope>NUCLEOTIDE SEQUENCE [LARGE SCALE MRNA]</scope>
    <source>
        <strain>N6</strain>
        <tissue>Ovary</tissue>
    </source>
</reference>
<protein>
    <recommendedName>
        <fullName evidence="3">Polyprenal reductase</fullName>
        <ecNumber evidence="1">1.3.1.94</ecNumber>
    </recommendedName>
    <alternativeName>
        <fullName>3-oxo-5-alpha-steroid 4-dehydrogenase 3</fullName>
        <ecNumber evidence="1">1.3.1.22</ecNumber>
    </alternativeName>
    <alternativeName>
        <fullName>Steroid 5-alpha-reductase 3</fullName>
        <shortName>S5AR 3</shortName>
        <shortName>SR type 3</shortName>
    </alternativeName>
</protein>
<comment type="function">
    <text evidence="1">Plays a key role in early steps of protein N-linked glycosylation by being involved in the conversion of polyprenol into dolichol (By similarity). Acts as a polyprenal reductase that mediates the reduction of polyprenal into dolichal in a NADP-dependent mechanism (By similarity). Dolichols are required for the synthesis of dolichol-linked monosaccharides and the oligosaccharide precursor used for N-glycosylation (By similarity). Also able to convert testosterone (T) into 5-alpha-dihydrotestosterone (DHT) (By similarity).</text>
</comment>
<comment type="catalytic activity">
    <reaction evidence="1">
        <text>a di-trans,poly-cis-dolichal + NADP(+) = a di-trans,poly-cis-polyprenal + NADPH + H(+)</text>
        <dbReference type="Rhea" id="RHEA:80727"/>
        <dbReference type="Rhea" id="RHEA-COMP:19536"/>
        <dbReference type="Rhea" id="RHEA-COMP:19537"/>
        <dbReference type="ChEBI" id="CHEBI:15378"/>
        <dbReference type="ChEBI" id="CHEBI:57783"/>
        <dbReference type="ChEBI" id="CHEBI:58349"/>
        <dbReference type="ChEBI" id="CHEBI:231623"/>
        <dbReference type="ChEBI" id="CHEBI:231637"/>
        <dbReference type="EC" id="1.3.1.94"/>
    </reaction>
    <physiologicalReaction direction="right-to-left" evidence="1">
        <dbReference type="Rhea" id="RHEA:80729"/>
    </physiologicalReaction>
</comment>
<comment type="catalytic activity">
    <reaction evidence="1">
        <text>a 3-oxo-5alpha-steroid + NADP(+) = a 3-oxo-Delta(4)-steroid + NADPH + H(+)</text>
        <dbReference type="Rhea" id="RHEA:54384"/>
        <dbReference type="ChEBI" id="CHEBI:13601"/>
        <dbReference type="ChEBI" id="CHEBI:15378"/>
        <dbReference type="ChEBI" id="CHEBI:47909"/>
        <dbReference type="ChEBI" id="CHEBI:57783"/>
        <dbReference type="ChEBI" id="CHEBI:58349"/>
        <dbReference type="EC" id="1.3.1.22"/>
    </reaction>
    <physiologicalReaction direction="right-to-left" evidence="1">
        <dbReference type="Rhea" id="RHEA:54386"/>
    </physiologicalReaction>
</comment>
<comment type="catalytic activity">
    <reaction evidence="1">
        <text>androst-4-ene-3,17-dione + NADPH + H(+) = 5alpha-androstan-3,17-dione + NADP(+)</text>
        <dbReference type="Rhea" id="RHEA:50816"/>
        <dbReference type="ChEBI" id="CHEBI:15378"/>
        <dbReference type="ChEBI" id="CHEBI:15994"/>
        <dbReference type="ChEBI" id="CHEBI:16422"/>
        <dbReference type="ChEBI" id="CHEBI:57783"/>
        <dbReference type="ChEBI" id="CHEBI:58349"/>
    </reaction>
    <physiologicalReaction direction="right-to-left" evidence="1">
        <dbReference type="Rhea" id="RHEA:50818"/>
    </physiologicalReaction>
</comment>
<comment type="catalytic activity">
    <reaction evidence="1">
        <text>17beta-hydroxy-5alpha-androstan-3-one + NADP(+) = testosterone + NADPH + H(+)</text>
        <dbReference type="Rhea" id="RHEA:50820"/>
        <dbReference type="ChEBI" id="CHEBI:15378"/>
        <dbReference type="ChEBI" id="CHEBI:16330"/>
        <dbReference type="ChEBI" id="CHEBI:17347"/>
        <dbReference type="ChEBI" id="CHEBI:57783"/>
        <dbReference type="ChEBI" id="CHEBI:58349"/>
        <dbReference type="EC" id="1.3.1.22"/>
    </reaction>
    <physiologicalReaction direction="right-to-left" evidence="1">
        <dbReference type="Rhea" id="RHEA:50822"/>
    </physiologicalReaction>
</comment>
<comment type="pathway">
    <text evidence="1">Protein modification; protein glycosylation.</text>
</comment>
<comment type="subcellular location">
    <subcellularLocation>
        <location evidence="1">Endoplasmic reticulum membrane</location>
        <topology evidence="1">Multi-pass membrane protein</topology>
    </subcellularLocation>
</comment>
<comment type="similarity">
    <text evidence="3">Belongs to the steroid 5-alpha reductase family. Polyprenal reductase subfamily.</text>
</comment>
<gene>
    <name type="primary">srd5a3</name>
</gene>
<accession>Q0P4J9</accession>
<organism>
    <name type="scientific">Xenopus tropicalis</name>
    <name type="common">Western clawed frog</name>
    <name type="synonym">Silurana tropicalis</name>
    <dbReference type="NCBI Taxonomy" id="8364"/>
    <lineage>
        <taxon>Eukaryota</taxon>
        <taxon>Metazoa</taxon>
        <taxon>Chordata</taxon>
        <taxon>Craniata</taxon>
        <taxon>Vertebrata</taxon>
        <taxon>Euteleostomi</taxon>
        <taxon>Amphibia</taxon>
        <taxon>Batrachia</taxon>
        <taxon>Anura</taxon>
        <taxon>Pipoidea</taxon>
        <taxon>Pipidae</taxon>
        <taxon>Xenopodinae</taxon>
        <taxon>Xenopus</taxon>
        <taxon>Silurana</taxon>
    </lineage>
</organism>
<keyword id="KW-0256">Endoplasmic reticulum</keyword>
<keyword id="KW-0443">Lipid metabolism</keyword>
<keyword id="KW-0472">Membrane</keyword>
<keyword id="KW-0521">NADP</keyword>
<keyword id="KW-0560">Oxidoreductase</keyword>
<keyword id="KW-1185">Reference proteome</keyword>
<keyword id="KW-0812">Transmembrane</keyword>
<keyword id="KW-1133">Transmembrane helix</keyword>
<proteinExistence type="evidence at transcript level"/>
<evidence type="ECO:0000250" key="1">
    <source>
        <dbReference type="UniProtKB" id="Q9H8P0"/>
    </source>
</evidence>
<evidence type="ECO:0000255" key="2"/>
<evidence type="ECO:0000305" key="3"/>
<sequence length="308" mass="35876">MTLLALVWLLLDATFLITLLWHLLQGCKSGHSLLCSVFQDLIRYGKTKTGLQRPAWLQWFDIPKRCFWHFYCVSLIWNGCLLWILLRLLLQSVPVPEWLQLVLHFLHAGSEPQILDRELSVILALALLWLHSLRRLLECLFVSVFSNGVIHLVQYCFGLGYYFLIGITVLTYCPLDRRTVSTDNLLTQCHWYHILGLALYIWASLHQYRCHCILAGLRKSASGNVINLNHSVPCGDWFERVSCPHYFAELLIYVSIAVVFGLLNTIWWLVVLYVLLNQALAALLCHEFYHEKFDTYPIHRKAFIPFIF</sequence>
<dbReference type="EC" id="1.3.1.94" evidence="1"/>
<dbReference type="EC" id="1.3.1.22" evidence="1"/>
<dbReference type="EMBL" id="BC122039">
    <property type="protein sequence ID" value="AAI22040.1"/>
    <property type="molecule type" value="mRNA"/>
</dbReference>
<dbReference type="RefSeq" id="NP_001072539.1">
    <property type="nucleotide sequence ID" value="NM_001079071.1"/>
</dbReference>
<dbReference type="SMR" id="Q0P4J9"/>
<dbReference type="FunCoup" id="Q0P4J9">
    <property type="interactions" value="874"/>
</dbReference>
<dbReference type="STRING" id="8364.ENSXETP00000029132"/>
<dbReference type="PaxDb" id="8364-ENSXETP00000045522"/>
<dbReference type="DNASU" id="779994"/>
<dbReference type="GeneID" id="779994"/>
<dbReference type="KEGG" id="xtr:779994"/>
<dbReference type="AGR" id="Xenbase:XB-GENE-985511"/>
<dbReference type="CTD" id="79644"/>
<dbReference type="Xenbase" id="XB-GENE-985511">
    <property type="gene designation" value="srd5a3"/>
</dbReference>
<dbReference type="eggNOG" id="KOG1640">
    <property type="taxonomic scope" value="Eukaryota"/>
</dbReference>
<dbReference type="HOGENOM" id="CLU_044409_2_1_1"/>
<dbReference type="InParanoid" id="Q0P4J9"/>
<dbReference type="OrthoDB" id="541710at2759"/>
<dbReference type="Reactome" id="R-XTR-193048">
    <property type="pathway name" value="Androgen biosynthesis"/>
</dbReference>
<dbReference type="Reactome" id="R-XTR-446199">
    <property type="pathway name" value="Synthesis of Dolichyl-phosphate"/>
</dbReference>
<dbReference type="UniPathway" id="UPA00378"/>
<dbReference type="Proteomes" id="UP000008143">
    <property type="component" value="Chromosome 1"/>
</dbReference>
<dbReference type="GO" id="GO:0005783">
    <property type="term" value="C:endoplasmic reticulum"/>
    <property type="evidence" value="ECO:0000250"/>
    <property type="project" value="UniProtKB"/>
</dbReference>
<dbReference type="GO" id="GO:0005789">
    <property type="term" value="C:endoplasmic reticulum membrane"/>
    <property type="evidence" value="ECO:0007669"/>
    <property type="project" value="UniProtKB-SubCell"/>
</dbReference>
<dbReference type="GO" id="GO:0047751">
    <property type="term" value="F:3-oxo-5-alpha-steroid 4-dehydrogenase (NADP+) activity"/>
    <property type="evidence" value="ECO:0000250"/>
    <property type="project" value="UniProtKB"/>
</dbReference>
<dbReference type="GO" id="GO:0016628">
    <property type="term" value="F:oxidoreductase activity, acting on the CH-CH group of donors, NAD or NADP as acceptor"/>
    <property type="evidence" value="ECO:0000250"/>
    <property type="project" value="UniProtKB"/>
</dbReference>
<dbReference type="GO" id="GO:0160198">
    <property type="term" value="F:polyprenal reductase activity"/>
    <property type="evidence" value="ECO:0000250"/>
    <property type="project" value="UniProtKB"/>
</dbReference>
<dbReference type="GO" id="GO:0019408">
    <property type="term" value="P:dolichol biosynthetic process"/>
    <property type="evidence" value="ECO:0000250"/>
    <property type="project" value="UniProtKB"/>
</dbReference>
<dbReference type="GO" id="GO:0019348">
    <property type="term" value="P:dolichol metabolic process"/>
    <property type="evidence" value="ECO:0000250"/>
    <property type="project" value="UniProtKB"/>
</dbReference>
<dbReference type="GO" id="GO:0006488">
    <property type="term" value="P:dolichol-linked oligosaccharide biosynthetic process"/>
    <property type="evidence" value="ECO:0000250"/>
    <property type="project" value="UniProtKB"/>
</dbReference>
<dbReference type="GO" id="GO:0016095">
    <property type="term" value="P:polyprenol catabolic process"/>
    <property type="evidence" value="ECO:0000250"/>
    <property type="project" value="UniProtKB"/>
</dbReference>
<dbReference type="FunFam" id="1.20.120.1630:FF:000021">
    <property type="entry name" value="Polyprenol reductase 1"/>
    <property type="match status" value="1"/>
</dbReference>
<dbReference type="InterPro" id="IPR001104">
    <property type="entry name" value="3-oxo-5_a-steroid_4-DH_C"/>
</dbReference>
<dbReference type="InterPro" id="IPR039698">
    <property type="entry name" value="Dfg10/SRD5A3"/>
</dbReference>
<dbReference type="PANTHER" id="PTHR14624">
    <property type="entry name" value="DFG10 PROTEIN"/>
    <property type="match status" value="1"/>
</dbReference>
<dbReference type="PANTHER" id="PTHR14624:SF0">
    <property type="entry name" value="POLYPRENOL REDUCTASE"/>
    <property type="match status" value="1"/>
</dbReference>
<dbReference type="Pfam" id="PF02544">
    <property type="entry name" value="Steroid_dh"/>
    <property type="match status" value="1"/>
</dbReference>
<dbReference type="PROSITE" id="PS50244">
    <property type="entry name" value="S5A_REDUCTASE"/>
    <property type="match status" value="1"/>
</dbReference>
<feature type="chain" id="PRO_0000317706" description="Polyprenal reductase">
    <location>
        <begin position="1"/>
        <end position="308"/>
    </location>
</feature>
<feature type="topological domain" description="Cytoplasmic" evidence="2">
    <location>
        <begin position="1"/>
        <end position="2"/>
    </location>
</feature>
<feature type="transmembrane region" description="Helical" evidence="2">
    <location>
        <begin position="3"/>
        <end position="23"/>
    </location>
</feature>
<feature type="topological domain" description="Lumenal" evidence="2">
    <location>
        <begin position="24"/>
        <end position="65"/>
    </location>
</feature>
<feature type="transmembrane region" description="Helical" evidence="2">
    <location>
        <begin position="66"/>
        <end position="86"/>
    </location>
</feature>
<feature type="topological domain" description="Cytoplasmic" evidence="2">
    <location>
        <begin position="87"/>
        <end position="120"/>
    </location>
</feature>
<feature type="transmembrane region" description="Helical" evidence="2">
    <location>
        <begin position="121"/>
        <end position="141"/>
    </location>
</feature>
<feature type="topological domain" description="Lumenal" evidence="2">
    <location>
        <begin position="142"/>
        <end position="148"/>
    </location>
</feature>
<feature type="transmembrane region" description="Helical" evidence="2">
    <location>
        <begin position="149"/>
        <end position="169"/>
    </location>
</feature>
<feature type="topological domain" description="Cytoplasmic" evidence="2">
    <location>
        <begin position="170"/>
        <end position="184"/>
    </location>
</feature>
<feature type="transmembrane region" description="Helical" evidence="2">
    <location>
        <begin position="185"/>
        <end position="205"/>
    </location>
</feature>
<feature type="topological domain" description="Lumenal" evidence="2">
    <location>
        <begin position="206"/>
        <end position="255"/>
    </location>
</feature>
<feature type="transmembrane region" description="Helical" evidence="2">
    <location>
        <begin position="256"/>
        <end position="276"/>
    </location>
</feature>
<feature type="topological domain" description="Cytoplasmic" evidence="2">
    <location>
        <begin position="277"/>
        <end position="308"/>
    </location>
</feature>